<gene>
    <name type="primary">clp1</name>
    <name type="ORF">ACLA_014480</name>
</gene>
<sequence length="560" mass="58706">MSLPGLELSQTSAEREFVSAPPTQISLSKGSEWRFEVAFGTAIRVKLLSGTAELFGTELAASQTYAFSGTKAAIYTWHGCTLEVGAGDTISTIDGLGSAGMNGGAVRGYGAGGCQSEYTAEETPMVEYANVHFALEAMRQEAKATGKDGPRVLILGPENAGKTSLAKILTAYATKVGRQPIVVNLDPAEGMLSVPGSLTATAFRTMMNVEEGWGSSPMSGPSAIPVKLPLVYFYPLQNPLEAGASVYRPIVSRLALSVTGRMAEDEDTRETGIIVDTPGILSQGKAGSLEVINHIVTEFAINTILVIGSERLYSTMMRSYDNKPTASASAAASDERITVVKLSKSGGCVDRDAAFMKAVRESQIRTYFFGNPIPSTASAALSASASSTTNVTLSPHAQQLDFDSLAVYNYTISLPDEDEDEYDPSQLGTGDTFIPGGSNEAERAEPQQAEDSSFTPSMPGLAGSSGEDATSAANSAVPLKKVPRPAPTVLANSLLAITHAAPSAPSSEIRDASIMGFLYVADVDSEKGKIRVLAPIGGRVPPRAIVWGKKWPGEVVGLVG</sequence>
<keyword id="KW-0067">ATP-binding</keyword>
<keyword id="KW-0507">mRNA processing</keyword>
<keyword id="KW-0547">Nucleotide-binding</keyword>
<keyword id="KW-0539">Nucleus</keyword>
<keyword id="KW-1185">Reference proteome</keyword>
<feature type="chain" id="PRO_0000375192" description="mRNA cleavage and polyadenylation factor clp1">
    <location>
        <begin position="1"/>
        <end position="560"/>
    </location>
</feature>
<feature type="region of interest" description="Disordered" evidence="2">
    <location>
        <begin position="416"/>
        <end position="479"/>
    </location>
</feature>
<feature type="binding site" evidence="1">
    <location>
        <position position="32"/>
    </location>
    <ligand>
        <name>ATP</name>
        <dbReference type="ChEBI" id="CHEBI:30616"/>
    </ligand>
</feature>
<feature type="binding site" evidence="1">
    <location>
        <position position="71"/>
    </location>
    <ligand>
        <name>ATP</name>
        <dbReference type="ChEBI" id="CHEBI:30616"/>
    </ligand>
</feature>
<feature type="binding site" evidence="1">
    <location>
        <begin position="159"/>
        <end position="164"/>
    </location>
    <ligand>
        <name>ATP</name>
        <dbReference type="ChEBI" id="CHEBI:30616"/>
    </ligand>
</feature>
<accession>A1CB93</accession>
<organism>
    <name type="scientific">Aspergillus clavatus (strain ATCC 1007 / CBS 513.65 / DSM 816 / NCTC 3887 / NRRL 1 / QM 1276 / 107)</name>
    <dbReference type="NCBI Taxonomy" id="344612"/>
    <lineage>
        <taxon>Eukaryota</taxon>
        <taxon>Fungi</taxon>
        <taxon>Dikarya</taxon>
        <taxon>Ascomycota</taxon>
        <taxon>Pezizomycotina</taxon>
        <taxon>Eurotiomycetes</taxon>
        <taxon>Eurotiomycetidae</taxon>
        <taxon>Eurotiales</taxon>
        <taxon>Aspergillaceae</taxon>
        <taxon>Aspergillus</taxon>
        <taxon>Aspergillus subgen. Fumigati</taxon>
    </lineage>
</organism>
<reference key="1">
    <citation type="journal article" date="2008" name="PLoS Genet.">
        <title>Genomic islands in the pathogenic filamentous fungus Aspergillus fumigatus.</title>
        <authorList>
            <person name="Fedorova N.D."/>
            <person name="Khaldi N."/>
            <person name="Joardar V.S."/>
            <person name="Maiti R."/>
            <person name="Amedeo P."/>
            <person name="Anderson M.J."/>
            <person name="Crabtree J."/>
            <person name="Silva J.C."/>
            <person name="Badger J.H."/>
            <person name="Albarraq A."/>
            <person name="Angiuoli S."/>
            <person name="Bussey H."/>
            <person name="Bowyer P."/>
            <person name="Cotty P.J."/>
            <person name="Dyer P.S."/>
            <person name="Egan A."/>
            <person name="Galens K."/>
            <person name="Fraser-Liggett C.M."/>
            <person name="Haas B.J."/>
            <person name="Inman J.M."/>
            <person name="Kent R."/>
            <person name="Lemieux S."/>
            <person name="Malavazi I."/>
            <person name="Orvis J."/>
            <person name="Roemer T."/>
            <person name="Ronning C.M."/>
            <person name="Sundaram J.P."/>
            <person name="Sutton G."/>
            <person name="Turner G."/>
            <person name="Venter J.C."/>
            <person name="White O.R."/>
            <person name="Whitty B.R."/>
            <person name="Youngman P."/>
            <person name="Wolfe K.H."/>
            <person name="Goldman G.H."/>
            <person name="Wortman J.R."/>
            <person name="Jiang B."/>
            <person name="Denning D.W."/>
            <person name="Nierman W.C."/>
        </authorList>
    </citation>
    <scope>NUCLEOTIDE SEQUENCE [LARGE SCALE GENOMIC DNA]</scope>
    <source>
        <strain>ATCC 1007 / CBS 513.65 / DSM 816 / NCTC 3887 / NRRL 1 / QM 1276 / 107</strain>
    </source>
</reference>
<proteinExistence type="inferred from homology"/>
<protein>
    <recommendedName>
        <fullName evidence="1">mRNA cleavage and polyadenylation factor clp1</fullName>
    </recommendedName>
</protein>
<name>CLP1_ASPCL</name>
<comment type="function">
    <text evidence="1">Required for endonucleolytic cleavage during polyadenylation-dependent pre-mRNA 3'-end formation.</text>
</comment>
<comment type="subunit">
    <text evidence="1">Component of a pre-mRNA cleavage factor complex. Interacts directly with PCF11.</text>
</comment>
<comment type="subcellular location">
    <subcellularLocation>
        <location evidence="1">Nucleus</location>
    </subcellularLocation>
</comment>
<comment type="similarity">
    <text evidence="1">Belongs to the Clp1 family. Clp1 subfamily.</text>
</comment>
<comment type="caution">
    <text evidence="3">May lack the polyribonucleotide 5'-hydroxyl-kinase and polynucleotide 5'-hydroxyl-kinase activities that are characteristic of the human ortholog.</text>
</comment>
<dbReference type="EMBL" id="DS027049">
    <property type="protein sequence ID" value="EAW13011.1"/>
    <property type="molecule type" value="Genomic_DNA"/>
</dbReference>
<dbReference type="RefSeq" id="XP_001274437.1">
    <property type="nucleotide sequence ID" value="XM_001274436.1"/>
</dbReference>
<dbReference type="SMR" id="A1CB93"/>
<dbReference type="STRING" id="344612.A1CB93"/>
<dbReference type="EnsemblFungi" id="EAW13011">
    <property type="protein sequence ID" value="EAW13011"/>
    <property type="gene ID" value="ACLA_014480"/>
</dbReference>
<dbReference type="GeneID" id="4706108"/>
<dbReference type="KEGG" id="act:ACLA_014480"/>
<dbReference type="VEuPathDB" id="FungiDB:ACLA_014480"/>
<dbReference type="eggNOG" id="KOG2749">
    <property type="taxonomic scope" value="Eukaryota"/>
</dbReference>
<dbReference type="HOGENOM" id="CLU_018195_3_1_1"/>
<dbReference type="OMA" id="VQYVNCH"/>
<dbReference type="OrthoDB" id="258143at2759"/>
<dbReference type="Proteomes" id="UP000006701">
    <property type="component" value="Unassembled WGS sequence"/>
</dbReference>
<dbReference type="GO" id="GO:0005849">
    <property type="term" value="C:mRNA cleavage factor complex"/>
    <property type="evidence" value="ECO:0007669"/>
    <property type="project" value="UniProtKB-UniRule"/>
</dbReference>
<dbReference type="GO" id="GO:0005524">
    <property type="term" value="F:ATP binding"/>
    <property type="evidence" value="ECO:0007669"/>
    <property type="project" value="UniProtKB-UniRule"/>
</dbReference>
<dbReference type="GO" id="GO:0051731">
    <property type="term" value="F:polynucleotide 5'-hydroxyl-kinase activity"/>
    <property type="evidence" value="ECO:0007669"/>
    <property type="project" value="InterPro"/>
</dbReference>
<dbReference type="GO" id="GO:0031124">
    <property type="term" value="P:mRNA 3'-end processing"/>
    <property type="evidence" value="ECO:0007669"/>
    <property type="project" value="UniProtKB-UniRule"/>
</dbReference>
<dbReference type="GO" id="GO:0006388">
    <property type="term" value="P:tRNA splicing, via endonucleolytic cleavage and ligation"/>
    <property type="evidence" value="ECO:0007669"/>
    <property type="project" value="TreeGrafter"/>
</dbReference>
<dbReference type="FunFam" id="3.40.50.300:FF:002095">
    <property type="entry name" value="mRNA cleavage and polyadenylation factor clp1"/>
    <property type="match status" value="1"/>
</dbReference>
<dbReference type="FunFam" id="2.60.120.1030:FF:000001">
    <property type="entry name" value="Protein CLP1 homolog 5"/>
    <property type="match status" value="1"/>
</dbReference>
<dbReference type="Gene3D" id="2.60.120.1030">
    <property type="entry name" value="Clp1, DNA binding domain"/>
    <property type="match status" value="1"/>
</dbReference>
<dbReference type="Gene3D" id="3.40.50.300">
    <property type="entry name" value="P-loop containing nucleotide triphosphate hydrolases"/>
    <property type="match status" value="1"/>
</dbReference>
<dbReference type="Gene3D" id="2.40.30.330">
    <property type="entry name" value="Pre-mRNA cleavage complex subunit Clp1, C-terminal domain"/>
    <property type="match status" value="1"/>
</dbReference>
<dbReference type="HAMAP" id="MF_03035">
    <property type="entry name" value="Clp1"/>
    <property type="match status" value="1"/>
</dbReference>
<dbReference type="InterPro" id="IPR028606">
    <property type="entry name" value="Clp1"/>
</dbReference>
<dbReference type="InterPro" id="IPR045116">
    <property type="entry name" value="Clp1/Grc3"/>
</dbReference>
<dbReference type="InterPro" id="IPR010655">
    <property type="entry name" value="Clp1_C"/>
</dbReference>
<dbReference type="InterPro" id="IPR038238">
    <property type="entry name" value="Clp1_C_sf"/>
</dbReference>
<dbReference type="InterPro" id="IPR032324">
    <property type="entry name" value="Clp1_N"/>
</dbReference>
<dbReference type="InterPro" id="IPR038239">
    <property type="entry name" value="Clp1_N_sf"/>
</dbReference>
<dbReference type="InterPro" id="IPR032319">
    <property type="entry name" value="CLP1_P"/>
</dbReference>
<dbReference type="InterPro" id="IPR027417">
    <property type="entry name" value="P-loop_NTPase"/>
</dbReference>
<dbReference type="PANTHER" id="PTHR12755">
    <property type="entry name" value="CLEAVAGE/POLYADENYLATION FACTOR IA SUBUNIT CLP1P"/>
    <property type="match status" value="1"/>
</dbReference>
<dbReference type="PANTHER" id="PTHR12755:SF6">
    <property type="entry name" value="POLYRIBONUCLEOTIDE 5'-HYDROXYL-KINASE CLP1"/>
    <property type="match status" value="1"/>
</dbReference>
<dbReference type="Pfam" id="PF06807">
    <property type="entry name" value="Clp1"/>
    <property type="match status" value="1"/>
</dbReference>
<dbReference type="Pfam" id="PF16573">
    <property type="entry name" value="CLP1_N"/>
    <property type="match status" value="1"/>
</dbReference>
<dbReference type="Pfam" id="PF16575">
    <property type="entry name" value="CLP1_P"/>
    <property type="match status" value="1"/>
</dbReference>
<dbReference type="SUPFAM" id="SSF52540">
    <property type="entry name" value="P-loop containing nucleoside triphosphate hydrolases"/>
    <property type="match status" value="1"/>
</dbReference>
<evidence type="ECO:0000255" key="1">
    <source>
        <dbReference type="HAMAP-Rule" id="MF_03035"/>
    </source>
</evidence>
<evidence type="ECO:0000256" key="2">
    <source>
        <dbReference type="SAM" id="MobiDB-lite"/>
    </source>
</evidence>
<evidence type="ECO:0000305" key="3"/>